<gene>
    <name evidence="1" type="primary">fusA</name>
    <name type="ordered locus">Tmel_0950</name>
</gene>
<name>EFG_THEM4</name>
<keyword id="KW-0963">Cytoplasm</keyword>
<keyword id="KW-0251">Elongation factor</keyword>
<keyword id="KW-0342">GTP-binding</keyword>
<keyword id="KW-0547">Nucleotide-binding</keyword>
<keyword id="KW-0648">Protein biosynthesis</keyword>
<proteinExistence type="inferred from homology"/>
<comment type="function">
    <text evidence="1">Catalyzes the GTP-dependent ribosomal translocation step during translation elongation. During this step, the ribosome changes from the pre-translocational (PRE) to the post-translocational (POST) state as the newly formed A-site-bound peptidyl-tRNA and P-site-bound deacylated tRNA move to the P and E sites, respectively. Catalyzes the coordinated movement of the two tRNA molecules, the mRNA and conformational changes in the ribosome.</text>
</comment>
<comment type="subcellular location">
    <subcellularLocation>
        <location evidence="1">Cytoplasm</location>
    </subcellularLocation>
</comment>
<comment type="similarity">
    <text evidence="1">Belongs to the TRAFAC class translation factor GTPase superfamily. Classic translation factor GTPase family. EF-G/EF-2 subfamily.</text>
</comment>
<feature type="chain" id="PRO_0000335856" description="Elongation factor G">
    <location>
        <begin position="1"/>
        <end position="691"/>
    </location>
</feature>
<feature type="domain" description="tr-type G">
    <location>
        <begin position="12"/>
        <end position="286"/>
    </location>
</feature>
<feature type="binding site" evidence="1">
    <location>
        <begin position="21"/>
        <end position="28"/>
    </location>
    <ligand>
        <name>GTP</name>
        <dbReference type="ChEBI" id="CHEBI:37565"/>
    </ligand>
</feature>
<feature type="binding site" evidence="1">
    <location>
        <begin position="85"/>
        <end position="89"/>
    </location>
    <ligand>
        <name>GTP</name>
        <dbReference type="ChEBI" id="CHEBI:37565"/>
    </ligand>
</feature>
<feature type="binding site" evidence="1">
    <location>
        <begin position="139"/>
        <end position="142"/>
    </location>
    <ligand>
        <name>GTP</name>
        <dbReference type="ChEBI" id="CHEBI:37565"/>
    </ligand>
</feature>
<dbReference type="EMBL" id="CP000716">
    <property type="protein sequence ID" value="ABR30811.1"/>
    <property type="molecule type" value="Genomic_DNA"/>
</dbReference>
<dbReference type="RefSeq" id="WP_012057172.1">
    <property type="nucleotide sequence ID" value="NC_009616.1"/>
</dbReference>
<dbReference type="SMR" id="A6LLL0"/>
<dbReference type="STRING" id="391009.Tmel_0950"/>
<dbReference type="KEGG" id="tme:Tmel_0950"/>
<dbReference type="eggNOG" id="COG0480">
    <property type="taxonomic scope" value="Bacteria"/>
</dbReference>
<dbReference type="HOGENOM" id="CLU_002794_4_1_0"/>
<dbReference type="OrthoDB" id="9804431at2"/>
<dbReference type="Proteomes" id="UP000001110">
    <property type="component" value="Chromosome"/>
</dbReference>
<dbReference type="GO" id="GO:0005737">
    <property type="term" value="C:cytoplasm"/>
    <property type="evidence" value="ECO:0007669"/>
    <property type="project" value="UniProtKB-SubCell"/>
</dbReference>
<dbReference type="GO" id="GO:0005525">
    <property type="term" value="F:GTP binding"/>
    <property type="evidence" value="ECO:0007669"/>
    <property type="project" value="UniProtKB-UniRule"/>
</dbReference>
<dbReference type="GO" id="GO:0003924">
    <property type="term" value="F:GTPase activity"/>
    <property type="evidence" value="ECO:0007669"/>
    <property type="project" value="InterPro"/>
</dbReference>
<dbReference type="GO" id="GO:0003746">
    <property type="term" value="F:translation elongation factor activity"/>
    <property type="evidence" value="ECO:0007669"/>
    <property type="project" value="UniProtKB-UniRule"/>
</dbReference>
<dbReference type="GO" id="GO:0032790">
    <property type="term" value="P:ribosome disassembly"/>
    <property type="evidence" value="ECO:0007669"/>
    <property type="project" value="TreeGrafter"/>
</dbReference>
<dbReference type="CDD" id="cd01886">
    <property type="entry name" value="EF-G"/>
    <property type="match status" value="1"/>
</dbReference>
<dbReference type="CDD" id="cd16262">
    <property type="entry name" value="EFG_III"/>
    <property type="match status" value="1"/>
</dbReference>
<dbReference type="CDD" id="cd01434">
    <property type="entry name" value="EFG_mtEFG1_IV"/>
    <property type="match status" value="1"/>
</dbReference>
<dbReference type="CDD" id="cd03713">
    <property type="entry name" value="EFG_mtEFG_C"/>
    <property type="match status" value="1"/>
</dbReference>
<dbReference type="CDD" id="cd04088">
    <property type="entry name" value="EFG_mtEFG_II"/>
    <property type="match status" value="1"/>
</dbReference>
<dbReference type="FunFam" id="2.40.30.10:FF:000006">
    <property type="entry name" value="Elongation factor G"/>
    <property type="match status" value="1"/>
</dbReference>
<dbReference type="FunFam" id="3.30.230.10:FF:000003">
    <property type="entry name" value="Elongation factor G"/>
    <property type="match status" value="1"/>
</dbReference>
<dbReference type="FunFam" id="3.30.70.240:FF:000001">
    <property type="entry name" value="Elongation factor G"/>
    <property type="match status" value="1"/>
</dbReference>
<dbReference type="FunFam" id="3.30.70.870:FF:000001">
    <property type="entry name" value="Elongation factor G"/>
    <property type="match status" value="1"/>
</dbReference>
<dbReference type="FunFam" id="3.40.50.300:FF:000029">
    <property type="entry name" value="Elongation factor G"/>
    <property type="match status" value="1"/>
</dbReference>
<dbReference type="Gene3D" id="3.30.230.10">
    <property type="match status" value="1"/>
</dbReference>
<dbReference type="Gene3D" id="3.30.70.240">
    <property type="match status" value="1"/>
</dbReference>
<dbReference type="Gene3D" id="3.30.70.870">
    <property type="entry name" value="Elongation Factor G (Translational Gtpase), domain 3"/>
    <property type="match status" value="1"/>
</dbReference>
<dbReference type="Gene3D" id="3.40.50.300">
    <property type="entry name" value="P-loop containing nucleotide triphosphate hydrolases"/>
    <property type="match status" value="1"/>
</dbReference>
<dbReference type="Gene3D" id="2.40.30.10">
    <property type="entry name" value="Translation factors"/>
    <property type="match status" value="1"/>
</dbReference>
<dbReference type="HAMAP" id="MF_00054_B">
    <property type="entry name" value="EF_G_EF_2_B"/>
    <property type="match status" value="1"/>
</dbReference>
<dbReference type="InterPro" id="IPR041095">
    <property type="entry name" value="EFG_II"/>
</dbReference>
<dbReference type="InterPro" id="IPR009022">
    <property type="entry name" value="EFG_III"/>
</dbReference>
<dbReference type="InterPro" id="IPR035647">
    <property type="entry name" value="EFG_III/V"/>
</dbReference>
<dbReference type="InterPro" id="IPR047872">
    <property type="entry name" value="EFG_IV"/>
</dbReference>
<dbReference type="InterPro" id="IPR035649">
    <property type="entry name" value="EFG_V"/>
</dbReference>
<dbReference type="InterPro" id="IPR000640">
    <property type="entry name" value="EFG_V-like"/>
</dbReference>
<dbReference type="InterPro" id="IPR004161">
    <property type="entry name" value="EFTu-like_2"/>
</dbReference>
<dbReference type="InterPro" id="IPR031157">
    <property type="entry name" value="G_TR_CS"/>
</dbReference>
<dbReference type="InterPro" id="IPR027417">
    <property type="entry name" value="P-loop_NTPase"/>
</dbReference>
<dbReference type="InterPro" id="IPR020568">
    <property type="entry name" value="Ribosomal_Su5_D2-typ_SF"/>
</dbReference>
<dbReference type="InterPro" id="IPR014721">
    <property type="entry name" value="Ribsml_uS5_D2-typ_fold_subgr"/>
</dbReference>
<dbReference type="InterPro" id="IPR005225">
    <property type="entry name" value="Small_GTP-bd"/>
</dbReference>
<dbReference type="InterPro" id="IPR000795">
    <property type="entry name" value="T_Tr_GTP-bd_dom"/>
</dbReference>
<dbReference type="InterPro" id="IPR009000">
    <property type="entry name" value="Transl_B-barrel_sf"/>
</dbReference>
<dbReference type="InterPro" id="IPR004540">
    <property type="entry name" value="Transl_elong_EFG/EF2"/>
</dbReference>
<dbReference type="InterPro" id="IPR005517">
    <property type="entry name" value="Transl_elong_EFG/EF2_IV"/>
</dbReference>
<dbReference type="NCBIfam" id="TIGR00484">
    <property type="entry name" value="EF-G"/>
    <property type="match status" value="1"/>
</dbReference>
<dbReference type="NCBIfam" id="NF009379">
    <property type="entry name" value="PRK12740.1-3"/>
    <property type="match status" value="1"/>
</dbReference>
<dbReference type="NCBIfam" id="NF009381">
    <property type="entry name" value="PRK12740.1-5"/>
    <property type="match status" value="1"/>
</dbReference>
<dbReference type="NCBIfam" id="TIGR00231">
    <property type="entry name" value="small_GTP"/>
    <property type="match status" value="1"/>
</dbReference>
<dbReference type="PANTHER" id="PTHR43261:SF1">
    <property type="entry name" value="RIBOSOME-RELEASING FACTOR 2, MITOCHONDRIAL"/>
    <property type="match status" value="1"/>
</dbReference>
<dbReference type="PANTHER" id="PTHR43261">
    <property type="entry name" value="TRANSLATION ELONGATION FACTOR G-RELATED"/>
    <property type="match status" value="1"/>
</dbReference>
<dbReference type="Pfam" id="PF00679">
    <property type="entry name" value="EFG_C"/>
    <property type="match status" value="1"/>
</dbReference>
<dbReference type="Pfam" id="PF14492">
    <property type="entry name" value="EFG_III"/>
    <property type="match status" value="1"/>
</dbReference>
<dbReference type="Pfam" id="PF03764">
    <property type="entry name" value="EFG_IV"/>
    <property type="match status" value="1"/>
</dbReference>
<dbReference type="Pfam" id="PF00009">
    <property type="entry name" value="GTP_EFTU"/>
    <property type="match status" value="1"/>
</dbReference>
<dbReference type="Pfam" id="PF03144">
    <property type="entry name" value="GTP_EFTU_D2"/>
    <property type="match status" value="1"/>
</dbReference>
<dbReference type="PRINTS" id="PR00315">
    <property type="entry name" value="ELONGATNFCT"/>
</dbReference>
<dbReference type="SMART" id="SM00838">
    <property type="entry name" value="EFG_C"/>
    <property type="match status" value="1"/>
</dbReference>
<dbReference type="SMART" id="SM00889">
    <property type="entry name" value="EFG_IV"/>
    <property type="match status" value="1"/>
</dbReference>
<dbReference type="SUPFAM" id="SSF54980">
    <property type="entry name" value="EF-G C-terminal domain-like"/>
    <property type="match status" value="2"/>
</dbReference>
<dbReference type="SUPFAM" id="SSF52540">
    <property type="entry name" value="P-loop containing nucleoside triphosphate hydrolases"/>
    <property type="match status" value="1"/>
</dbReference>
<dbReference type="SUPFAM" id="SSF54211">
    <property type="entry name" value="Ribosomal protein S5 domain 2-like"/>
    <property type="match status" value="1"/>
</dbReference>
<dbReference type="SUPFAM" id="SSF50447">
    <property type="entry name" value="Translation proteins"/>
    <property type="match status" value="1"/>
</dbReference>
<dbReference type="PROSITE" id="PS00301">
    <property type="entry name" value="G_TR_1"/>
    <property type="match status" value="1"/>
</dbReference>
<dbReference type="PROSITE" id="PS51722">
    <property type="entry name" value="G_TR_2"/>
    <property type="match status" value="1"/>
</dbReference>
<organism>
    <name type="scientific">Thermosipho melanesiensis (strain DSM 12029 / CIP 104789 / BI429)</name>
    <dbReference type="NCBI Taxonomy" id="391009"/>
    <lineage>
        <taxon>Bacteria</taxon>
        <taxon>Thermotogati</taxon>
        <taxon>Thermotogota</taxon>
        <taxon>Thermotogae</taxon>
        <taxon>Thermotogales</taxon>
        <taxon>Fervidobacteriaceae</taxon>
        <taxon>Thermosipho</taxon>
    </lineage>
</organism>
<sequence>MKEIQAIYVDLKKLRNIGIMAHIDAGKTTTTERILFYTGRKHNIGSVDDGTATMDWMVQEKERGITIVSAATTCMWKDHRINIIDTPGHVDFTIEVERALRVLDGAIAVFDAAAGVEPQSETVWRQADKYNVPRIAFMNKMDKIGADFDMAVKSMEKKLKANPIPVQMPMGAEDSFEGVIDLIEMKAIRWLDVEGTEMVYEEIPEKYLAKAEEMREDLLEKLAELDDEIMEMYLEGEEISNELIKKALREATLENKATPVFCGSAKMNRGVQPLLDGVLEYLPSPLDMPPVKGWNSDGEEIEVLPDENEPFTALAFKIQADPYVGKLTFFRVYSGRLEKGSYVYNSTKGKKERISRLIFMHADKREDVEYVRAGDIVAAIGLKDTKTGDTLCDEKRPVILEKMEFPEPVISIAIEPETKKDQDKLSKALTLLSDEDPSFRAYVDNETGETIISGMGELHLEIIVDRLKREFNTNVRVGQPQVAYRETIQVPAEAEGKYIRQSGGRGQYGHVVMRFEPIDLSKTFEFEDRIVGGVIPKEYIPAVEEGVREAAQSGYLSGYPMVGIKAILLDGSYHEVDSSEMAFKIAASMAFKEAVKKAQPVLLEPVMSVEITTPEEYMGNIIADLNSRRAHVESLDSRGHLRIIKALVPLSEMFGYATDLRSQSQGRATYTMVLAKYAKVPDKIAERIISK</sequence>
<evidence type="ECO:0000255" key="1">
    <source>
        <dbReference type="HAMAP-Rule" id="MF_00054"/>
    </source>
</evidence>
<accession>A6LLL0</accession>
<reference key="1">
    <citation type="submission" date="2007-05" db="EMBL/GenBank/DDBJ databases">
        <title>Complete sequence of Thermosipho melanesiensis BI429.</title>
        <authorList>
            <consortium name="US DOE Joint Genome Institute"/>
            <person name="Copeland A."/>
            <person name="Lucas S."/>
            <person name="Lapidus A."/>
            <person name="Barry K."/>
            <person name="Glavina del Rio T."/>
            <person name="Dalin E."/>
            <person name="Tice H."/>
            <person name="Pitluck S."/>
            <person name="Chertkov O."/>
            <person name="Brettin T."/>
            <person name="Bruce D."/>
            <person name="Detter J.C."/>
            <person name="Han C."/>
            <person name="Schmutz J."/>
            <person name="Larimer F."/>
            <person name="Land M."/>
            <person name="Hauser L."/>
            <person name="Kyrpides N."/>
            <person name="Mikhailova N."/>
            <person name="Nelson K."/>
            <person name="Gogarten J.P."/>
            <person name="Noll K."/>
            <person name="Richardson P."/>
        </authorList>
    </citation>
    <scope>NUCLEOTIDE SEQUENCE [LARGE SCALE GENOMIC DNA]</scope>
    <source>
        <strain>DSM 12029 / CIP 104789 / BI429</strain>
    </source>
</reference>
<protein>
    <recommendedName>
        <fullName evidence="1">Elongation factor G</fullName>
        <shortName evidence="1">EF-G</shortName>
    </recommendedName>
</protein>